<accession>B3CN29</accession>
<protein>
    <recommendedName>
        <fullName evidence="1">Large ribosomal subunit protein uL2</fullName>
    </recommendedName>
    <alternativeName>
        <fullName evidence="3">50S ribosomal protein L2</fullName>
    </alternativeName>
</protein>
<keyword id="KW-0687">Ribonucleoprotein</keyword>
<keyword id="KW-0689">Ribosomal protein</keyword>
<keyword id="KW-0694">RNA-binding</keyword>
<keyword id="KW-0699">rRNA-binding</keyword>
<proteinExistence type="inferred from homology"/>
<comment type="function">
    <text evidence="1">One of the primary rRNA binding proteins. Required for association of the 30S and 50S subunits to form the 70S ribosome, for tRNA binding and peptide bond formation. It has been suggested to have peptidyltransferase activity; this is somewhat controversial. Makes several contacts with the 16S rRNA in the 70S ribosome.</text>
</comment>
<comment type="subunit">
    <text evidence="1">Part of the 50S ribosomal subunit. Forms a bridge to the 30S subunit in the 70S ribosome.</text>
</comment>
<comment type="similarity">
    <text evidence="1">Belongs to the universal ribosomal protein uL2 family.</text>
</comment>
<name>RL2_WOLPP</name>
<reference key="1">
    <citation type="journal article" date="2008" name="Mol. Biol. Evol.">
        <title>Genome evolution of Wolbachia strain wPip from the Culex pipiens group.</title>
        <authorList>
            <person name="Klasson L."/>
            <person name="Walker T."/>
            <person name="Sebaihia M."/>
            <person name="Sanders M.J."/>
            <person name="Quail M.A."/>
            <person name="Lord A."/>
            <person name="Sanders S."/>
            <person name="Earl J."/>
            <person name="O'Neill S.L."/>
            <person name="Thomson N."/>
            <person name="Sinkins S.P."/>
            <person name="Parkhill J."/>
        </authorList>
    </citation>
    <scope>NUCLEOTIDE SEQUENCE [LARGE SCALE GENOMIC DNA]</scope>
    <source>
        <strain>wPip</strain>
    </source>
</reference>
<gene>
    <name evidence="1" type="primary">rplB</name>
    <name type="ordered locus">WP1169</name>
</gene>
<organism>
    <name type="scientific">Wolbachia pipientis subsp. Culex pipiens (strain wPip)</name>
    <dbReference type="NCBI Taxonomy" id="570417"/>
    <lineage>
        <taxon>Bacteria</taxon>
        <taxon>Pseudomonadati</taxon>
        <taxon>Pseudomonadota</taxon>
        <taxon>Alphaproteobacteria</taxon>
        <taxon>Rickettsiales</taxon>
        <taxon>Anaplasmataceae</taxon>
        <taxon>Wolbachieae</taxon>
        <taxon>Wolbachia</taxon>
    </lineage>
</organism>
<sequence length="274" mass="29736">MGMKFFNPVTPSSRGTILISKIGLSKDKPEKSLVFGKKSSGGRNNHGRITTRHRGGGHKKKYRVIDFKRNRSDQGIVEKIEYDPNRSGFLALISYKEDDTKSYILAPQGMKPGDVVTAGDDADILPGNCLLLKHIPVGSFVHNVELKPGNGAAIARAAGCYAQIVGRDGQYVLLRLRSGQIRLILSSCKATIGVVSNLDHKNRKLGKAGRSRWLGIRPAVRGVAMNPVDHPHGGGEGKTSGGRHPVTPWGVATKGKKTRKKNKSSDKYIKKLKG</sequence>
<evidence type="ECO:0000255" key="1">
    <source>
        <dbReference type="HAMAP-Rule" id="MF_01320"/>
    </source>
</evidence>
<evidence type="ECO:0000256" key="2">
    <source>
        <dbReference type="SAM" id="MobiDB-lite"/>
    </source>
</evidence>
<evidence type="ECO:0000305" key="3"/>
<dbReference type="EMBL" id="AM999887">
    <property type="protein sequence ID" value="CAQ55277.1"/>
    <property type="molecule type" value="Genomic_DNA"/>
</dbReference>
<dbReference type="RefSeq" id="WP_007302535.1">
    <property type="nucleotide sequence ID" value="NC_010981.1"/>
</dbReference>
<dbReference type="SMR" id="B3CN29"/>
<dbReference type="KEGG" id="wpi:WP1169"/>
<dbReference type="eggNOG" id="COG0090">
    <property type="taxonomic scope" value="Bacteria"/>
</dbReference>
<dbReference type="HOGENOM" id="CLU_036235_2_1_5"/>
<dbReference type="Proteomes" id="UP000008814">
    <property type="component" value="Chromosome"/>
</dbReference>
<dbReference type="GO" id="GO:0015934">
    <property type="term" value="C:large ribosomal subunit"/>
    <property type="evidence" value="ECO:0007669"/>
    <property type="project" value="InterPro"/>
</dbReference>
<dbReference type="GO" id="GO:0019843">
    <property type="term" value="F:rRNA binding"/>
    <property type="evidence" value="ECO:0007669"/>
    <property type="project" value="UniProtKB-UniRule"/>
</dbReference>
<dbReference type="GO" id="GO:0003735">
    <property type="term" value="F:structural constituent of ribosome"/>
    <property type="evidence" value="ECO:0007669"/>
    <property type="project" value="InterPro"/>
</dbReference>
<dbReference type="GO" id="GO:0016740">
    <property type="term" value="F:transferase activity"/>
    <property type="evidence" value="ECO:0007669"/>
    <property type="project" value="InterPro"/>
</dbReference>
<dbReference type="GO" id="GO:0002181">
    <property type="term" value="P:cytoplasmic translation"/>
    <property type="evidence" value="ECO:0007669"/>
    <property type="project" value="TreeGrafter"/>
</dbReference>
<dbReference type="FunFam" id="2.30.30.30:FF:000001">
    <property type="entry name" value="50S ribosomal protein L2"/>
    <property type="match status" value="1"/>
</dbReference>
<dbReference type="FunFam" id="4.10.950.10:FF:000001">
    <property type="entry name" value="50S ribosomal protein L2"/>
    <property type="match status" value="1"/>
</dbReference>
<dbReference type="Gene3D" id="2.30.30.30">
    <property type="match status" value="1"/>
</dbReference>
<dbReference type="Gene3D" id="2.40.50.140">
    <property type="entry name" value="Nucleic acid-binding proteins"/>
    <property type="match status" value="1"/>
</dbReference>
<dbReference type="Gene3D" id="4.10.950.10">
    <property type="entry name" value="Ribosomal protein L2, domain 3"/>
    <property type="match status" value="1"/>
</dbReference>
<dbReference type="HAMAP" id="MF_01320_B">
    <property type="entry name" value="Ribosomal_uL2_B"/>
    <property type="match status" value="1"/>
</dbReference>
<dbReference type="InterPro" id="IPR012340">
    <property type="entry name" value="NA-bd_OB-fold"/>
</dbReference>
<dbReference type="InterPro" id="IPR014722">
    <property type="entry name" value="Rib_uL2_dom2"/>
</dbReference>
<dbReference type="InterPro" id="IPR002171">
    <property type="entry name" value="Ribosomal_uL2"/>
</dbReference>
<dbReference type="InterPro" id="IPR005880">
    <property type="entry name" value="Ribosomal_uL2_bac/org-type"/>
</dbReference>
<dbReference type="InterPro" id="IPR022669">
    <property type="entry name" value="Ribosomal_uL2_C"/>
</dbReference>
<dbReference type="InterPro" id="IPR022671">
    <property type="entry name" value="Ribosomal_uL2_CS"/>
</dbReference>
<dbReference type="InterPro" id="IPR014726">
    <property type="entry name" value="Ribosomal_uL2_dom3"/>
</dbReference>
<dbReference type="InterPro" id="IPR022666">
    <property type="entry name" value="Ribosomal_uL2_RNA-bd_dom"/>
</dbReference>
<dbReference type="InterPro" id="IPR008991">
    <property type="entry name" value="Translation_prot_SH3-like_sf"/>
</dbReference>
<dbReference type="NCBIfam" id="TIGR01171">
    <property type="entry name" value="rplB_bact"/>
    <property type="match status" value="1"/>
</dbReference>
<dbReference type="PANTHER" id="PTHR13691:SF5">
    <property type="entry name" value="LARGE RIBOSOMAL SUBUNIT PROTEIN UL2M"/>
    <property type="match status" value="1"/>
</dbReference>
<dbReference type="PANTHER" id="PTHR13691">
    <property type="entry name" value="RIBOSOMAL PROTEIN L2"/>
    <property type="match status" value="1"/>
</dbReference>
<dbReference type="Pfam" id="PF00181">
    <property type="entry name" value="Ribosomal_L2"/>
    <property type="match status" value="1"/>
</dbReference>
<dbReference type="Pfam" id="PF03947">
    <property type="entry name" value="Ribosomal_L2_C"/>
    <property type="match status" value="1"/>
</dbReference>
<dbReference type="PIRSF" id="PIRSF002158">
    <property type="entry name" value="Ribosomal_L2"/>
    <property type="match status" value="1"/>
</dbReference>
<dbReference type="SMART" id="SM01383">
    <property type="entry name" value="Ribosomal_L2"/>
    <property type="match status" value="1"/>
</dbReference>
<dbReference type="SMART" id="SM01382">
    <property type="entry name" value="Ribosomal_L2_C"/>
    <property type="match status" value="1"/>
</dbReference>
<dbReference type="SUPFAM" id="SSF50249">
    <property type="entry name" value="Nucleic acid-binding proteins"/>
    <property type="match status" value="1"/>
</dbReference>
<dbReference type="SUPFAM" id="SSF50104">
    <property type="entry name" value="Translation proteins SH3-like domain"/>
    <property type="match status" value="1"/>
</dbReference>
<dbReference type="PROSITE" id="PS00467">
    <property type="entry name" value="RIBOSOMAL_L2"/>
    <property type="match status" value="1"/>
</dbReference>
<feature type="chain" id="PRO_1000141639" description="Large ribosomal subunit protein uL2">
    <location>
        <begin position="1"/>
        <end position="274"/>
    </location>
</feature>
<feature type="region of interest" description="Disordered" evidence="2">
    <location>
        <begin position="35"/>
        <end position="55"/>
    </location>
</feature>
<feature type="region of interest" description="Disordered" evidence="2">
    <location>
        <begin position="224"/>
        <end position="274"/>
    </location>
</feature>
<feature type="compositionally biased region" description="Basic residues" evidence="2">
    <location>
        <begin position="45"/>
        <end position="55"/>
    </location>
</feature>
<feature type="compositionally biased region" description="Basic and acidic residues" evidence="2">
    <location>
        <begin position="263"/>
        <end position="274"/>
    </location>
</feature>